<dbReference type="EMBL" id="AJ621614">
    <property type="protein sequence ID" value="CAF21727.1"/>
    <property type="molecule type" value="Genomic_DNA"/>
</dbReference>
<dbReference type="EMBL" id="AJ621254">
    <property type="protein sequence ID" value="CAF18432.1"/>
    <property type="molecule type" value="mRNA"/>
</dbReference>
<dbReference type="EMBL" id="AY647438">
    <property type="status" value="NOT_ANNOTATED_CDS"/>
    <property type="molecule type" value="mRNA"/>
</dbReference>
<dbReference type="RefSeq" id="NP_001004414.2">
    <property type="nucleotide sequence ID" value="NM_001004414.4"/>
</dbReference>
<dbReference type="SMR" id="Q6A2H4"/>
<dbReference type="FunCoup" id="Q6A2H4">
    <property type="interactions" value="94"/>
</dbReference>
<dbReference type="STRING" id="9031.ENSGALP00000001310"/>
<dbReference type="PaxDb" id="9031-ENSGALP00000001310"/>
<dbReference type="Ensembl" id="ENSGALT00010065794.1">
    <property type="protein sequence ID" value="ENSGALP00010040060.1"/>
    <property type="gene ID" value="ENSGALG00010027138.1"/>
</dbReference>
<dbReference type="GeneID" id="428264"/>
<dbReference type="KEGG" id="gga:428264"/>
<dbReference type="CTD" id="3586"/>
<dbReference type="VEuPathDB" id="HostDB:geneid_428264"/>
<dbReference type="eggNOG" id="ENOG502S22U">
    <property type="taxonomic scope" value="Eukaryota"/>
</dbReference>
<dbReference type="GeneTree" id="ENSGT00950000183124"/>
<dbReference type="HOGENOM" id="CLU_127747_0_0_1"/>
<dbReference type="InParanoid" id="Q6A2H4"/>
<dbReference type="OMA" id="CHRFFTC"/>
<dbReference type="OrthoDB" id="9931894at2759"/>
<dbReference type="PhylomeDB" id="Q6A2H4"/>
<dbReference type="Reactome" id="R-GGA-6783783">
    <property type="pathway name" value="Interleukin-10 signaling"/>
</dbReference>
<dbReference type="PRO" id="PR:Q6A2H4"/>
<dbReference type="Proteomes" id="UP000000539">
    <property type="component" value="Chromosome 26"/>
</dbReference>
<dbReference type="Bgee" id="ENSGALG00000000892">
    <property type="expression patterns" value="Expressed in granulocyte and 1 other cell type or tissue"/>
</dbReference>
<dbReference type="GO" id="GO:0005576">
    <property type="term" value="C:extracellular region"/>
    <property type="evidence" value="ECO:0000314"/>
    <property type="project" value="UniProtKB"/>
</dbReference>
<dbReference type="GO" id="GO:0005615">
    <property type="term" value="C:extracellular space"/>
    <property type="evidence" value="ECO:0000318"/>
    <property type="project" value="GO_Central"/>
</dbReference>
<dbReference type="GO" id="GO:0005125">
    <property type="term" value="F:cytokine activity"/>
    <property type="evidence" value="ECO:0000318"/>
    <property type="project" value="GO_Central"/>
</dbReference>
<dbReference type="GO" id="GO:0046983">
    <property type="term" value="F:protein dimerization activity"/>
    <property type="evidence" value="ECO:0007669"/>
    <property type="project" value="Ensembl"/>
</dbReference>
<dbReference type="GO" id="GO:0035729">
    <property type="term" value="P:cellular response to hepatocyte growth factor stimulus"/>
    <property type="evidence" value="ECO:0007669"/>
    <property type="project" value="Ensembl"/>
</dbReference>
<dbReference type="GO" id="GO:0071222">
    <property type="term" value="P:cellular response to lipopolysaccharide"/>
    <property type="evidence" value="ECO:0007669"/>
    <property type="project" value="Ensembl"/>
</dbReference>
<dbReference type="GO" id="GO:0002439">
    <property type="term" value="P:chronic inflammatory response to antigenic stimulus"/>
    <property type="evidence" value="ECO:0007669"/>
    <property type="project" value="Ensembl"/>
</dbReference>
<dbReference type="GO" id="GO:0042742">
    <property type="term" value="P:defense response to bacterium"/>
    <property type="evidence" value="ECO:0007669"/>
    <property type="project" value="Ensembl"/>
</dbReference>
<dbReference type="GO" id="GO:0042832">
    <property type="term" value="P:defense response to protozoan"/>
    <property type="evidence" value="ECO:0000314"/>
    <property type="project" value="UniProtKB"/>
</dbReference>
<dbReference type="GO" id="GO:0006955">
    <property type="term" value="P:immune response"/>
    <property type="evidence" value="ECO:0000318"/>
    <property type="project" value="GO_Central"/>
</dbReference>
<dbReference type="GO" id="GO:0140105">
    <property type="term" value="P:interleukin-10-mediated signaling pathway"/>
    <property type="evidence" value="ECO:0000318"/>
    <property type="project" value="GO_Central"/>
</dbReference>
<dbReference type="GO" id="GO:0010507">
    <property type="term" value="P:negative regulation of autophagy"/>
    <property type="evidence" value="ECO:0007669"/>
    <property type="project" value="Ensembl"/>
</dbReference>
<dbReference type="GO" id="GO:0030889">
    <property type="term" value="P:negative regulation of B cell proliferation"/>
    <property type="evidence" value="ECO:0007669"/>
    <property type="project" value="Ensembl"/>
</dbReference>
<dbReference type="GO" id="GO:0002875">
    <property type="term" value="P:negative regulation of chronic inflammatory response to antigenic stimulus"/>
    <property type="evidence" value="ECO:0007669"/>
    <property type="project" value="Ensembl"/>
</dbReference>
<dbReference type="GO" id="GO:0002719">
    <property type="term" value="P:negative regulation of cytokine production involved in immune response"/>
    <property type="evidence" value="ECO:0007669"/>
    <property type="project" value="Ensembl"/>
</dbReference>
<dbReference type="GO" id="GO:2000352">
    <property type="term" value="P:negative regulation of endothelial cell apoptotic process"/>
    <property type="evidence" value="ECO:0007669"/>
    <property type="project" value="Ensembl"/>
</dbReference>
<dbReference type="GO" id="GO:0034115">
    <property type="term" value="P:negative regulation of heterotypic cell-cell adhesion"/>
    <property type="evidence" value="ECO:0007669"/>
    <property type="project" value="Ensembl"/>
</dbReference>
<dbReference type="GO" id="GO:0050728">
    <property type="term" value="P:negative regulation of inflammatory response"/>
    <property type="evidence" value="ECO:0000318"/>
    <property type="project" value="GO_Central"/>
</dbReference>
<dbReference type="GO" id="GO:0032695">
    <property type="term" value="P:negative regulation of interleukin-12 production"/>
    <property type="evidence" value="ECO:0007669"/>
    <property type="project" value="Ensembl"/>
</dbReference>
<dbReference type="GO" id="GO:0032715">
    <property type="term" value="P:negative regulation of interleukin-6 production"/>
    <property type="evidence" value="ECO:0007669"/>
    <property type="project" value="Ensembl"/>
</dbReference>
<dbReference type="GO" id="GO:0051045">
    <property type="term" value="P:negative regulation of membrane protein ectodomain proteolysis"/>
    <property type="evidence" value="ECO:0007669"/>
    <property type="project" value="Ensembl"/>
</dbReference>
<dbReference type="GO" id="GO:0045347">
    <property type="term" value="P:negative regulation of MHC class II biosynthetic process"/>
    <property type="evidence" value="ECO:0007669"/>
    <property type="project" value="Ensembl"/>
</dbReference>
<dbReference type="GO" id="GO:0030886">
    <property type="term" value="P:negative regulation of myeloid dendritic cell activation"/>
    <property type="evidence" value="ECO:0007669"/>
    <property type="project" value="Ensembl"/>
</dbReference>
<dbReference type="GO" id="GO:0045019">
    <property type="term" value="P:negative regulation of nitric oxide biosynthetic process"/>
    <property type="evidence" value="ECO:0000314"/>
    <property type="project" value="UniProtKB"/>
</dbReference>
<dbReference type="GO" id="GO:1903377">
    <property type="term" value="P:negative regulation of oxidative stress-induced neuron intrinsic apoptotic signaling pathway"/>
    <property type="evidence" value="ECO:0007669"/>
    <property type="project" value="Ensembl"/>
</dbReference>
<dbReference type="GO" id="GO:0002826">
    <property type="term" value="P:negative regulation of T-helper 1 type immune response"/>
    <property type="evidence" value="ECO:0000305"/>
    <property type="project" value="UniProtKB"/>
</dbReference>
<dbReference type="GO" id="GO:0032720">
    <property type="term" value="P:negative regulation of tumor necrosis factor production"/>
    <property type="evidence" value="ECO:0007669"/>
    <property type="project" value="Ensembl"/>
</dbReference>
<dbReference type="GO" id="GO:0032689">
    <property type="term" value="P:negative regulation of type II interferon production"/>
    <property type="evidence" value="ECO:0000314"/>
    <property type="project" value="UniProtKB"/>
</dbReference>
<dbReference type="GO" id="GO:1904706">
    <property type="term" value="P:negative regulation of vascular associated smooth muscle cell proliferation"/>
    <property type="evidence" value="ECO:0007669"/>
    <property type="project" value="Ensembl"/>
</dbReference>
<dbReference type="GO" id="GO:0002904">
    <property type="term" value="P:positive regulation of B cell apoptotic process"/>
    <property type="evidence" value="ECO:0007669"/>
    <property type="project" value="Ensembl"/>
</dbReference>
<dbReference type="GO" id="GO:0045787">
    <property type="term" value="P:positive regulation of cell cycle"/>
    <property type="evidence" value="ECO:0007669"/>
    <property type="project" value="Ensembl"/>
</dbReference>
<dbReference type="GO" id="GO:0001819">
    <property type="term" value="P:positive regulation of cytokine production"/>
    <property type="evidence" value="ECO:0007669"/>
    <property type="project" value="Ensembl"/>
</dbReference>
<dbReference type="GO" id="GO:0001938">
    <property type="term" value="P:positive regulation of endothelial cell proliferation"/>
    <property type="evidence" value="ECO:0007669"/>
    <property type="project" value="Ensembl"/>
</dbReference>
<dbReference type="GO" id="GO:0002639">
    <property type="term" value="P:positive regulation of immunoglobulin production"/>
    <property type="evidence" value="ECO:0007669"/>
    <property type="project" value="Ensembl"/>
</dbReference>
<dbReference type="GO" id="GO:0045348">
    <property type="term" value="P:positive regulation of MHC class II biosynthetic process"/>
    <property type="evidence" value="ECO:0007669"/>
    <property type="project" value="Ensembl"/>
</dbReference>
<dbReference type="GO" id="GO:1902895">
    <property type="term" value="P:positive regulation of miRNA transcription"/>
    <property type="evidence" value="ECO:0007669"/>
    <property type="project" value="Ensembl"/>
</dbReference>
<dbReference type="GO" id="GO:1900100">
    <property type="term" value="P:positive regulation of plasma cell differentiation"/>
    <property type="evidence" value="ECO:0007669"/>
    <property type="project" value="Ensembl"/>
</dbReference>
<dbReference type="GO" id="GO:0046427">
    <property type="term" value="P:positive regulation of receptor signaling pathway via JAK-STAT"/>
    <property type="evidence" value="ECO:0000318"/>
    <property type="project" value="GO_Central"/>
</dbReference>
<dbReference type="GO" id="GO:1903672">
    <property type="term" value="P:positive regulation of sprouting angiogenesis"/>
    <property type="evidence" value="ECO:0007669"/>
    <property type="project" value="Ensembl"/>
</dbReference>
<dbReference type="GO" id="GO:0045944">
    <property type="term" value="P:positive regulation of transcription by RNA polymerase II"/>
    <property type="evidence" value="ECO:0007669"/>
    <property type="project" value="Ensembl"/>
</dbReference>
<dbReference type="GO" id="GO:1903034">
    <property type="term" value="P:regulation of response to wounding"/>
    <property type="evidence" value="ECO:0007669"/>
    <property type="project" value="Ensembl"/>
</dbReference>
<dbReference type="GO" id="GO:0051384">
    <property type="term" value="P:response to glucocorticoid"/>
    <property type="evidence" value="ECO:0007669"/>
    <property type="project" value="Ensembl"/>
</dbReference>
<dbReference type="FunFam" id="1.20.1250.10:FF:000011">
    <property type="entry name" value="Interleukin-10"/>
    <property type="match status" value="1"/>
</dbReference>
<dbReference type="Gene3D" id="1.20.1250.10">
    <property type="match status" value="1"/>
</dbReference>
<dbReference type="InterPro" id="IPR009079">
    <property type="entry name" value="4_helix_cytokine-like_core"/>
</dbReference>
<dbReference type="InterPro" id="IPR000098">
    <property type="entry name" value="IL-10"/>
</dbReference>
<dbReference type="InterPro" id="IPR020443">
    <property type="entry name" value="IL-10/19/20/24/26"/>
</dbReference>
<dbReference type="PANTHER" id="PTHR48482:SF5">
    <property type="entry name" value="INTERLEUKIN-10"/>
    <property type="match status" value="1"/>
</dbReference>
<dbReference type="PANTHER" id="PTHR48482">
    <property type="entry name" value="INTERLEUKIN-19-RELATED"/>
    <property type="match status" value="1"/>
</dbReference>
<dbReference type="Pfam" id="PF00726">
    <property type="entry name" value="IL10"/>
    <property type="match status" value="1"/>
</dbReference>
<dbReference type="PRINTS" id="PR01294">
    <property type="entry name" value="INTRLEUKIN10"/>
</dbReference>
<dbReference type="SMART" id="SM00188">
    <property type="entry name" value="IL10"/>
    <property type="match status" value="1"/>
</dbReference>
<dbReference type="SUPFAM" id="SSF47266">
    <property type="entry name" value="4-helical cytokines"/>
    <property type="match status" value="1"/>
</dbReference>
<evidence type="ECO:0000250" key="1">
    <source>
        <dbReference type="UniProtKB" id="P18893"/>
    </source>
</evidence>
<evidence type="ECO:0000250" key="2">
    <source>
        <dbReference type="UniProtKB" id="P22301"/>
    </source>
</evidence>
<evidence type="ECO:0000255" key="3"/>
<evidence type="ECO:0000269" key="4">
    <source>
    </source>
</evidence>
<evidence type="ECO:0000269" key="5">
    <source>
    </source>
</evidence>
<evidence type="ECO:0000269" key="6">
    <source>
    </source>
</evidence>
<evidence type="ECO:0000269" key="7">
    <source>
    </source>
</evidence>
<evidence type="ECO:0000269" key="8">
    <source>
    </source>
</evidence>
<evidence type="ECO:0000305" key="9"/>
<evidence type="ECO:0000312" key="10">
    <source>
        <dbReference type="EMBL" id="CAF21727.1"/>
    </source>
</evidence>
<reference evidence="9 10" key="1">
    <citation type="journal article" date="2004" name="J. Immunol.">
        <title>Cloning and characterization of chicken IL-10 and its role in the immune response to Eimeria maxima.</title>
        <authorList>
            <person name="Rothwell L."/>
            <person name="Young J.R."/>
            <person name="Zoorob R."/>
            <person name="Whittaker C.A."/>
            <person name="Hesketh P."/>
            <person name="Archer A."/>
            <person name="Smith A.L."/>
            <person name="Kaiser P."/>
        </authorList>
    </citation>
    <scope>NUCLEOTIDE SEQUENCE [GENOMIC DNA / MRNA]</scope>
    <scope>FUNCTION</scope>
    <scope>TISSUE SPECIFICITY</scope>
    <source>
        <tissue evidence="4">Cecum</tissue>
    </source>
</reference>
<reference evidence="9" key="2">
    <citation type="journal article" date="2005" name="Anim. Genet.">
        <title>Annotation of the chicken IL10 gene cluster and effects of lipopolysaccharide stimulation on IL10 gene expression.</title>
        <authorList>
            <person name="Yilmaz A."/>
            <person name="Shen S."/>
            <person name="Adelson D.L."/>
            <person name="Xavier S."/>
            <person name="Zhu J."/>
        </authorList>
    </citation>
    <scope>NUCLEOTIDE SEQUENCE [MRNA]</scope>
    <scope>INDUCTION</scope>
</reference>
<reference evidence="9" key="3">
    <citation type="journal article" date="2006" name="Vet. Immunol. Immunopathol.">
        <title>Analysis of chicken cytokine and chemokine gene expression following Eimeria acervulina and Eimeria tenella infections.</title>
        <authorList>
            <person name="Hong Y.H."/>
            <person name="Lillehoj H.S."/>
            <person name="Lee S.H."/>
            <person name="Dalloul R.A."/>
            <person name="Lillehoj E.P."/>
        </authorList>
    </citation>
    <scope>INDUCTION</scope>
</reference>
<reference evidence="9" key="4">
    <citation type="journal article" date="2006" name="Vet. Immunol. Immunopathol.">
        <title>Changes in immune-related gene expression and intestinal lymphocyte subpopulations following Eimeria maxima infection of chickens.</title>
        <authorList>
            <person name="Hong Y.H."/>
            <person name="Lillehoj H.S."/>
            <person name="Lillehoj E.P."/>
            <person name="Lee S.H."/>
        </authorList>
    </citation>
    <scope>INDUCTION</scope>
</reference>
<reference evidence="9" key="5">
    <citation type="journal article" date="2007" name="Poult. Sci.">
        <title>Ontogeny of cytokine gene expression in the chicken spleen.</title>
        <authorList>
            <person name="Abdul-Careem M.F."/>
            <person name="Hunter D.B."/>
            <person name="Lambourne M.D."/>
            <person name="Barta J."/>
            <person name="Sharif S."/>
        </authorList>
    </citation>
    <scope>DEVELOPMENTAL STAGE</scope>
</reference>
<organism>
    <name type="scientific">Gallus gallus</name>
    <name type="common">Chicken</name>
    <dbReference type="NCBI Taxonomy" id="9031"/>
    <lineage>
        <taxon>Eukaryota</taxon>
        <taxon>Metazoa</taxon>
        <taxon>Chordata</taxon>
        <taxon>Craniata</taxon>
        <taxon>Vertebrata</taxon>
        <taxon>Euteleostomi</taxon>
        <taxon>Archelosauria</taxon>
        <taxon>Archosauria</taxon>
        <taxon>Dinosauria</taxon>
        <taxon>Saurischia</taxon>
        <taxon>Theropoda</taxon>
        <taxon>Coelurosauria</taxon>
        <taxon>Aves</taxon>
        <taxon>Neognathae</taxon>
        <taxon>Galloanserae</taxon>
        <taxon>Galliformes</taxon>
        <taxon>Phasianidae</taxon>
        <taxon>Phasianinae</taxon>
        <taxon>Gallus</taxon>
    </lineage>
</organism>
<feature type="signal peptide" evidence="3">
    <location>
        <begin position="1"/>
        <end position="21"/>
    </location>
</feature>
<feature type="chain" id="PRO_0000296319" description="Interleukin-10" evidence="3">
    <location>
        <begin position="22"/>
        <end position="175"/>
    </location>
</feature>
<feature type="disulfide bond" evidence="2">
    <location>
        <begin position="26"/>
        <end position="123"/>
    </location>
</feature>
<feature type="disulfide bond" evidence="2">
    <location>
        <begin position="77"/>
        <end position="129"/>
    </location>
</feature>
<feature type="sequence conflict" description="In Ref. 1; CAF21727." evidence="9" ref="1">
    <original>M</original>
    <variation>I</variation>
    <location>
        <position position="120"/>
    </location>
</feature>
<protein>
    <recommendedName>
        <fullName>Interleukin-10</fullName>
        <shortName>IL-10</shortName>
    </recommendedName>
</protein>
<comment type="function">
    <text evidence="1 2">Major immune regulatory cytokine that acts on many cells of the immune system where it has profound anti-inflammatory functions, limiting excessive tissue disruption caused by inflammation. Mechanistically, IL10 binds to its heterotetrameric receptor comprising IL10RA and IL10RB leading to JAK1 and STAT2-mediated phosphorylation of STAT3. In turn, STAT3 translocates to the nucleus where it drives expression of anti-inflammatory mediators. Targets antigen-presenting cells (APCs) such as macrophages and monocytes and inhibits their release of pro-inflammatory cytokines including granulocyte-macrophage colony-stimulating factor /GM-CSF, granulocyte colony-stimulating factor/G-CSF, IL-1 alpha, IL-1 beta, IL-6, IL-8 and TNF-alpha. Also interferes with antigen presentation by reducing the expression of MHC-class II and co-stimulatory molecules, thereby inhibiting their ability to induce T cell activation (By similarity). In addition, controls the inflammatory response of macrophages by reprogramming essential metabolic pathways including mTOR signaling (By similarity).</text>
</comment>
<comment type="subunit">
    <text evidence="2">Homodimer. Interacts with IL10RA and IL10RB.</text>
</comment>
<comment type="subcellular location">
    <subcellularLocation>
        <location evidence="2">Secreted</location>
    </subcellularLocation>
</comment>
<comment type="tissue specificity">
    <text evidence="4">Expressed predominantly in bursa of Fabricius and cecal tonsils with low levels in thymus, liver and lung.</text>
</comment>
<comment type="developmental stage">
    <text evidence="8">Expression is detected as early as embryonic day 12. Higher expression in spleen of post-hatch chickens than embryos. Gradual increase in expression in the spleen which peaks by day 7 post-hatch.</text>
</comment>
<comment type="induction">
    <text evidence="5 6 7">By lipopolysaccharide (LPS) in white blood cells, liver and spleen 3 hours after treatment. Decreases to basal levels 8 hours after treatment. By primary infection with E.acervulina and E.tenella.</text>
</comment>
<comment type="miscellaneous">
    <text evidence="4">Chickens susceptible to E.maxima infection show higher constitutive and post-infection levels in spleen and higher post-infection levels in small intestine than infection-resistant animals.</text>
</comment>
<comment type="similarity">
    <text evidence="3">Belongs to the IL-10 family.</text>
</comment>
<name>IL10_CHICK</name>
<keyword id="KW-0202">Cytokine</keyword>
<keyword id="KW-1015">Disulfide bond</keyword>
<keyword id="KW-1185">Reference proteome</keyword>
<keyword id="KW-0964">Secreted</keyword>
<keyword id="KW-0732">Signal</keyword>
<gene>
    <name evidence="10" type="primary">IL10</name>
</gene>
<accession>Q6A2H4</accession>
<accession>Q6A2H5</accession>
<sequence>MQTCCQALLLLLAACTLPAHCLEPTCLHFSELLPARLRELRVKFEEIKDYFQSRDDELNIQLLSSELLDEFKGTFGCQSVSEMLRFYTDEVLPRAMQTSTSHQQSMGDLGNMLLGLKATMRRCHRFFTCEKRSKAIKQIKETFEKMDENGIYKAMGEFDIFINYIEEYLLMRRRK</sequence>
<proteinExistence type="evidence at transcript level"/>